<evidence type="ECO:0000250" key="1"/>
<sequence length="353" mass="38550">MKKTIVALAVAAVAATSANAATVYNQDGTKVDVNGSLRLILKKEKNERGDLVDNGSRVSFKASHDLGEGLSALAYTELRFSKNVPVQVKDQQGEVVREYEVEKLGNNVHVKRLYAGFAYEGLGTLTFGNQLTIGDDVGLSDYTYFNSGINNLLSSGEKAINFKSAEFNGFTFGGAYVFSADADKQALRDGRGFVVAGLYNRKMGDVGFAFEAGYSQKYVKQEVEQNPPAAQKVFKDEKEKAFMVGAELSYAGLALGVDYAQSKVTNVDGKKRALEVGLNYDLNDRAKVYTDFIWEKEGPKGDVTRNRTVAVGFGYKLHKQVETFVEAAWGREKDSDGVTTKNNVVGTGLRVHF</sequence>
<feature type="signal peptide" evidence="1">
    <location>
        <begin position="1"/>
        <end position="20"/>
    </location>
</feature>
<feature type="chain" id="PRO_0000025270" description="Major outer membrane protein">
    <location>
        <begin position="21"/>
        <end position="353"/>
    </location>
</feature>
<name>OMPH1_PASMD</name>
<accession>O54339</accession>
<keyword id="KW-0998">Cell outer membrane</keyword>
<keyword id="KW-1015">Disulfide bond</keyword>
<keyword id="KW-0406">Ion transport</keyword>
<keyword id="KW-0472">Membrane</keyword>
<keyword id="KW-0626">Porin</keyword>
<keyword id="KW-0732">Signal</keyword>
<keyword id="KW-0812">Transmembrane</keyword>
<keyword id="KW-1134">Transmembrane beta strand</keyword>
<keyword id="KW-0813">Transport</keyword>
<dbReference type="EMBL" id="U50907">
    <property type="protein sequence ID" value="AAC02243.1"/>
    <property type="molecule type" value="Genomic_DNA"/>
</dbReference>
<dbReference type="RefSeq" id="WP_005753765.1">
    <property type="nucleotide sequence ID" value="NZ_JAMJUV010000105.1"/>
</dbReference>
<dbReference type="SMR" id="O54339"/>
<dbReference type="GO" id="GO:0009279">
    <property type="term" value="C:cell outer membrane"/>
    <property type="evidence" value="ECO:0007669"/>
    <property type="project" value="UniProtKB-SubCell"/>
</dbReference>
<dbReference type="GO" id="GO:0046930">
    <property type="term" value="C:pore complex"/>
    <property type="evidence" value="ECO:0007669"/>
    <property type="project" value="UniProtKB-KW"/>
</dbReference>
<dbReference type="GO" id="GO:0015288">
    <property type="term" value="F:porin activity"/>
    <property type="evidence" value="ECO:0007669"/>
    <property type="project" value="UniProtKB-KW"/>
</dbReference>
<dbReference type="GO" id="GO:0006811">
    <property type="term" value="P:monoatomic ion transport"/>
    <property type="evidence" value="ECO:0007669"/>
    <property type="project" value="UniProtKB-KW"/>
</dbReference>
<dbReference type="CDD" id="cd00342">
    <property type="entry name" value="gram_neg_porins"/>
    <property type="match status" value="1"/>
</dbReference>
<dbReference type="Gene3D" id="2.40.160.10">
    <property type="entry name" value="Porin"/>
    <property type="match status" value="1"/>
</dbReference>
<dbReference type="InterPro" id="IPR050298">
    <property type="entry name" value="Gram-neg_bact_OMP"/>
</dbReference>
<dbReference type="InterPro" id="IPR033900">
    <property type="entry name" value="Gram_neg_porin_domain"/>
</dbReference>
<dbReference type="InterPro" id="IPR023614">
    <property type="entry name" value="Porin_dom_sf"/>
</dbReference>
<dbReference type="PANTHER" id="PTHR34501:SF2">
    <property type="entry name" value="OUTER MEMBRANE PORIN F-RELATED"/>
    <property type="match status" value="1"/>
</dbReference>
<dbReference type="PANTHER" id="PTHR34501">
    <property type="entry name" value="PROTEIN YDDL-RELATED"/>
    <property type="match status" value="1"/>
</dbReference>
<dbReference type="Pfam" id="PF13609">
    <property type="entry name" value="Porin_4"/>
    <property type="match status" value="1"/>
</dbReference>
<dbReference type="SUPFAM" id="SSF56935">
    <property type="entry name" value="Porins"/>
    <property type="match status" value="1"/>
</dbReference>
<gene>
    <name type="primary">ompH</name>
</gene>
<comment type="function">
    <text evidence="1">Structural rigidity of the outer membrane of elementary bodies and porin forming, permitting diffusion of solutes through the intracellular reticulate body membrane.</text>
</comment>
<comment type="subunit">
    <text evidence="1">Disulfide bond interactions within and between MOMP molecules and other components form high molecular-weight oligomers.</text>
</comment>
<comment type="subcellular location">
    <subcellularLocation>
        <location>Cell outer membrane</location>
        <topology>Multi-pass membrane protein</topology>
    </subcellularLocation>
</comment>
<reference key="1">
    <citation type="journal article" date="1997" name="J. Bacteriol.">
        <title>Cloning and characterization of the major outer membrane protein gene (ompH) of Pasteurella multocida X-73.</title>
        <authorList>
            <person name="Luo Y."/>
            <person name="Glisson J.R."/>
            <person name="Jackwood M.W."/>
            <person name="Hancock R.E."/>
            <person name="Bains M."/>
            <person name="Cheng I.H."/>
            <person name="Wang C."/>
        </authorList>
    </citation>
    <scope>NUCLEOTIDE SEQUENCE [GENOMIC DNA]</scope>
    <source>
        <strain>Serogroup A:1 / X73</strain>
    </source>
</reference>
<proteinExistence type="inferred from homology"/>
<organism>
    <name type="scientific">Pasteurella multocida</name>
    <dbReference type="NCBI Taxonomy" id="747"/>
    <lineage>
        <taxon>Bacteria</taxon>
        <taxon>Pseudomonadati</taxon>
        <taxon>Pseudomonadota</taxon>
        <taxon>Gammaproteobacteria</taxon>
        <taxon>Pasteurellales</taxon>
        <taxon>Pasteurellaceae</taxon>
        <taxon>Pasteurella</taxon>
    </lineage>
</organism>
<protein>
    <recommendedName>
        <fullName>Major outer membrane protein</fullName>
        <shortName>MOMP</shortName>
    </recommendedName>
    <alternativeName>
        <fullName>Outer membrane protein H</fullName>
    </alternativeName>
</protein>